<accession>Q1KXT0</accession>
<geneLocation type="chloroplast"/>
<keyword id="KW-0150">Chloroplast</keyword>
<keyword id="KW-0472">Membrane</keyword>
<keyword id="KW-0597">Phosphoprotein</keyword>
<keyword id="KW-0602">Photosynthesis</keyword>
<keyword id="KW-0604">Photosystem II</keyword>
<keyword id="KW-0934">Plastid</keyword>
<keyword id="KW-0793">Thylakoid</keyword>
<keyword id="KW-0812">Transmembrane</keyword>
<keyword id="KW-1133">Transmembrane helix</keyword>
<gene>
    <name evidence="2" type="primary">psbH</name>
</gene>
<organism>
    <name type="scientific">Helianthus annuus</name>
    <name type="common">Common sunflower</name>
    <dbReference type="NCBI Taxonomy" id="4232"/>
    <lineage>
        <taxon>Eukaryota</taxon>
        <taxon>Viridiplantae</taxon>
        <taxon>Streptophyta</taxon>
        <taxon>Embryophyta</taxon>
        <taxon>Tracheophyta</taxon>
        <taxon>Spermatophyta</taxon>
        <taxon>Magnoliopsida</taxon>
        <taxon>eudicotyledons</taxon>
        <taxon>Gunneridae</taxon>
        <taxon>Pentapetalae</taxon>
        <taxon>asterids</taxon>
        <taxon>campanulids</taxon>
        <taxon>Asterales</taxon>
        <taxon>Asteraceae</taxon>
        <taxon>Asteroideae</taxon>
        <taxon>Heliantheae alliance</taxon>
        <taxon>Heliantheae</taxon>
        <taxon>Helianthus</taxon>
    </lineage>
</organism>
<dbReference type="EMBL" id="DQ383815">
    <property type="protein sequence ID" value="ABD47174.1"/>
    <property type="molecule type" value="Genomic_DNA"/>
</dbReference>
<dbReference type="RefSeq" id="YP_588146.1">
    <property type="nucleotide sequence ID" value="NC_007977.1"/>
</dbReference>
<dbReference type="SMR" id="Q1KXT0"/>
<dbReference type="GeneID" id="4055688"/>
<dbReference type="KEGG" id="han:4055688"/>
<dbReference type="OrthoDB" id="1855002at2759"/>
<dbReference type="GO" id="GO:0009535">
    <property type="term" value="C:chloroplast thylakoid membrane"/>
    <property type="evidence" value="ECO:0007669"/>
    <property type="project" value="UniProtKB-SubCell"/>
</dbReference>
<dbReference type="GO" id="GO:0009523">
    <property type="term" value="C:photosystem II"/>
    <property type="evidence" value="ECO:0007669"/>
    <property type="project" value="UniProtKB-KW"/>
</dbReference>
<dbReference type="GO" id="GO:0042301">
    <property type="term" value="F:phosphate ion binding"/>
    <property type="evidence" value="ECO:0007669"/>
    <property type="project" value="InterPro"/>
</dbReference>
<dbReference type="GO" id="GO:0015979">
    <property type="term" value="P:photosynthesis"/>
    <property type="evidence" value="ECO:0007669"/>
    <property type="project" value="UniProtKB-UniRule"/>
</dbReference>
<dbReference type="GO" id="GO:0050821">
    <property type="term" value="P:protein stabilization"/>
    <property type="evidence" value="ECO:0007669"/>
    <property type="project" value="InterPro"/>
</dbReference>
<dbReference type="FunFam" id="1.20.5.880:FF:000001">
    <property type="entry name" value="Photosystem II reaction center protein H"/>
    <property type="match status" value="1"/>
</dbReference>
<dbReference type="Gene3D" id="1.20.5.880">
    <property type="entry name" value="Photosystem II reaction center protein H"/>
    <property type="match status" value="1"/>
</dbReference>
<dbReference type="HAMAP" id="MF_00752">
    <property type="entry name" value="PSII_PsbH"/>
    <property type="match status" value="1"/>
</dbReference>
<dbReference type="InterPro" id="IPR001056">
    <property type="entry name" value="PSII_PsbH"/>
</dbReference>
<dbReference type="InterPro" id="IPR036863">
    <property type="entry name" value="PSII_PsbH_sf"/>
</dbReference>
<dbReference type="NCBIfam" id="NF002728">
    <property type="entry name" value="PRK02624.1"/>
    <property type="match status" value="1"/>
</dbReference>
<dbReference type="PANTHER" id="PTHR34469">
    <property type="entry name" value="PHOTOSYSTEM II REACTION CENTER PROTEIN H"/>
    <property type="match status" value="1"/>
</dbReference>
<dbReference type="PANTHER" id="PTHR34469:SF4">
    <property type="entry name" value="PHOTOSYSTEM II REACTION CENTER PROTEIN H"/>
    <property type="match status" value="1"/>
</dbReference>
<dbReference type="Pfam" id="PF00737">
    <property type="entry name" value="PsbH"/>
    <property type="match status" value="1"/>
</dbReference>
<dbReference type="SUPFAM" id="SSF161025">
    <property type="entry name" value="Photosystem II 10 kDa phosphoprotein PsbH"/>
    <property type="match status" value="1"/>
</dbReference>
<comment type="function">
    <text evidence="2">One of the components of the core complex of photosystem II (PSII), required for its stability and/or assembly. PSII is a light-driven water:plastoquinone oxidoreductase that uses light energy to abstract electrons from H(2)O, generating O(2) and a proton gradient subsequently used for ATP formation. It consists of a core antenna complex that captures photons, and an electron transfer chain that converts photonic excitation into a charge separation.</text>
</comment>
<comment type="subunit">
    <text evidence="2">PSII is composed of 1 copy each of membrane proteins PsbA, PsbB, PsbC, PsbD, PsbE, PsbF, PsbH, PsbI, PsbJ, PsbK, PsbL, PsbM, PsbT, PsbX, PsbY, PsbZ, Psb30/Ycf12, at least 3 peripheral proteins of the oxygen-evolving complex and a large number of cofactors. It forms dimeric complexes.</text>
</comment>
<comment type="subcellular location">
    <subcellularLocation>
        <location evidence="2">Plastid</location>
        <location evidence="2">Chloroplast thylakoid membrane</location>
        <topology evidence="2">Single-pass membrane protein</topology>
    </subcellularLocation>
</comment>
<comment type="PTM">
    <text evidence="2">Phosphorylation is a light-dependent reaction catalyzed by a membrane-bound kinase; phosphorylation occurs on Thr residue(s) in the N-terminus of the protein.</text>
</comment>
<comment type="similarity">
    <text evidence="2">Belongs to the PsbH family.</text>
</comment>
<proteinExistence type="inferred from homology"/>
<reference key="1">
    <citation type="submission" date="2006-01" db="EMBL/GenBank/DDBJ databases">
        <title>A comparison of the first two published chloroplast genomes in Asteraceae: Lactuca and Helianthus.</title>
        <authorList>
            <person name="Timme R.E."/>
            <person name="Kuehl J.V."/>
            <person name="Boore J.L."/>
            <person name="Jansen R.K."/>
        </authorList>
    </citation>
    <scope>NUCLEOTIDE SEQUENCE [LARGE SCALE GENOMIC DNA]</scope>
    <source>
        <strain>cv. HA383</strain>
    </source>
</reference>
<protein>
    <recommendedName>
        <fullName evidence="2">Photosystem II reaction center protein H</fullName>
        <shortName evidence="2">PSII-H</shortName>
    </recommendedName>
    <alternativeName>
        <fullName evidence="2">Photosystem II 10 kDa phosphoprotein</fullName>
    </alternativeName>
</protein>
<feature type="initiator methionine" description="Removed" evidence="1">
    <location>
        <position position="1"/>
    </location>
</feature>
<feature type="chain" id="PRO_0000275757" description="Photosystem II reaction center protein H">
    <location>
        <begin position="2"/>
        <end position="73"/>
    </location>
</feature>
<feature type="transmembrane region" description="Helical" evidence="2">
    <location>
        <begin position="41"/>
        <end position="61"/>
    </location>
</feature>
<feature type="region of interest" description="Disordered" evidence="3">
    <location>
        <begin position="1"/>
        <end position="21"/>
    </location>
</feature>
<feature type="compositionally biased region" description="Polar residues" evidence="3">
    <location>
        <begin position="1"/>
        <end position="11"/>
    </location>
</feature>
<feature type="modified residue" description="Phosphothreonine" evidence="2">
    <location>
        <position position="3"/>
    </location>
</feature>
<feature type="modified residue" description="Phosphothreonine" evidence="2">
    <location>
        <position position="5"/>
    </location>
</feature>
<evidence type="ECO:0000250" key="1">
    <source>
        <dbReference type="UniProtKB" id="P56780"/>
    </source>
</evidence>
<evidence type="ECO:0000255" key="2">
    <source>
        <dbReference type="HAMAP-Rule" id="MF_00752"/>
    </source>
</evidence>
<evidence type="ECO:0000256" key="3">
    <source>
        <dbReference type="SAM" id="MobiDB-lite"/>
    </source>
</evidence>
<name>PSBH_HELAN</name>
<sequence>MATQTVENGSKSGPRRTTVGNLLKPLNSEYGKVAPGWGTTPLMGVAMALFAVFLSIILEIYNSSVLLDGISMN</sequence>